<feature type="chain" id="PRO_0000142472" description="Eukaryotic translation initiation factor 5A">
    <location>
        <begin position="1"/>
        <end position="160"/>
    </location>
</feature>
<feature type="region of interest" description="Disordered" evidence="3">
    <location>
        <begin position="1"/>
        <end position="21"/>
    </location>
</feature>
<feature type="compositionally biased region" description="Basic and acidic residues" evidence="3">
    <location>
        <begin position="1"/>
        <end position="12"/>
    </location>
</feature>
<feature type="modified residue" description="Hypusine" evidence="2">
    <location>
        <position position="52"/>
    </location>
</feature>
<comment type="function">
    <text evidence="1">Translation factor that promotes translation elongation and termination, particularly upon ribosome stalling at specific amino acid sequence contexts (By similarity). Binds between the exit (E) and peptidyl (P) site of the ribosome and promotes rescue of stalled ribosome: specifically required for efficient translation of polyproline-containing peptides as well as other motifs that stall the ribosome (By similarity). Acts as a ribosome quality control (RQC) cofactor by joining the RQC complex to facilitate peptidyl transfer during CAT tailing step (By similarity).</text>
</comment>
<comment type="PTM">
    <text evidence="2">Lys-53 undergoes hypusination, a unique post-translational modification that consists in the addition of a butylamino group from spermidine to lysine side chain, leading to the formation of the unusual amino acid hypusine. eIF-5As are the only known proteins to undergo this modification, which is essential for their function.</text>
</comment>
<comment type="similarity">
    <text evidence="4">Belongs to the eIF-5A family.</text>
</comment>
<organism>
    <name type="scientific">Manihot esculenta</name>
    <name type="common">Cassava</name>
    <name type="synonym">Jatropha manihot</name>
    <dbReference type="NCBI Taxonomy" id="3983"/>
    <lineage>
        <taxon>Eukaryota</taxon>
        <taxon>Viridiplantae</taxon>
        <taxon>Streptophyta</taxon>
        <taxon>Embryophyta</taxon>
        <taxon>Tracheophyta</taxon>
        <taxon>Spermatophyta</taxon>
        <taxon>Magnoliopsida</taxon>
        <taxon>eudicotyledons</taxon>
        <taxon>Gunneridae</taxon>
        <taxon>Pentapetalae</taxon>
        <taxon>rosids</taxon>
        <taxon>fabids</taxon>
        <taxon>Malpighiales</taxon>
        <taxon>Euphorbiaceae</taxon>
        <taxon>Crotonoideae</taxon>
        <taxon>Manihoteae</taxon>
        <taxon>Manihot</taxon>
    </lineage>
</organism>
<proteinExistence type="evidence at transcript level"/>
<reference key="1">
    <citation type="submission" date="2000-11" db="EMBL/GenBank/DDBJ databases">
        <title>Cassava translation initiation factor 5A (eIF-5A).</title>
        <authorList>
            <person name="Reilly K."/>
            <person name="Winter M.J."/>
            <person name="Han Y."/>
            <person name="Tohme J."/>
            <person name="Beeching J.R."/>
        </authorList>
    </citation>
    <scope>NUCLEOTIDE SEQUENCE [MRNA]</scope>
</reference>
<accession>Q9AXJ4</accession>
<accession>Q94KV3</accession>
<sequence>MSDEEHHFESKADAGASKTFPQQAGTIRKNGYIVIKNRPCKVMEVSTSKTGKHGHAKCHFVGIDIFNGKKLEDIVPSSHNCDVPHVNRTDYQLIDISEDGFVSLLTETGNTKDDLRLPTDENLLSQIKDGFAEGKDLVVSVMSAMGEERICSLKDIGPKN</sequence>
<evidence type="ECO:0000250" key="1">
    <source>
        <dbReference type="UniProtKB" id="P23301"/>
    </source>
</evidence>
<evidence type="ECO:0000250" key="2">
    <source>
        <dbReference type="UniProtKB" id="Q9XI91"/>
    </source>
</evidence>
<evidence type="ECO:0000256" key="3">
    <source>
        <dbReference type="SAM" id="MobiDB-lite"/>
    </source>
</evidence>
<evidence type="ECO:0000305" key="4"/>
<keyword id="KW-0385">Hypusine</keyword>
<keyword id="KW-0396">Initiation factor</keyword>
<keyword id="KW-0648">Protein biosynthesis</keyword>
<dbReference type="EMBL" id="AF266464">
    <property type="protein sequence ID" value="AAK55848.1"/>
    <property type="molecule type" value="mRNA"/>
</dbReference>
<dbReference type="EMBL" id="AF323604">
    <property type="protein sequence ID" value="AAK12100.1"/>
    <property type="molecule type" value="mRNA"/>
</dbReference>
<dbReference type="SMR" id="Q9AXJ4"/>
<dbReference type="GO" id="GO:0043022">
    <property type="term" value="F:ribosome binding"/>
    <property type="evidence" value="ECO:0007669"/>
    <property type="project" value="InterPro"/>
</dbReference>
<dbReference type="GO" id="GO:0003723">
    <property type="term" value="F:RNA binding"/>
    <property type="evidence" value="ECO:0007669"/>
    <property type="project" value="InterPro"/>
</dbReference>
<dbReference type="GO" id="GO:0003746">
    <property type="term" value="F:translation elongation factor activity"/>
    <property type="evidence" value="ECO:0007669"/>
    <property type="project" value="InterPro"/>
</dbReference>
<dbReference type="GO" id="GO:0003743">
    <property type="term" value="F:translation initiation factor activity"/>
    <property type="evidence" value="ECO:0007669"/>
    <property type="project" value="UniProtKB-KW"/>
</dbReference>
<dbReference type="GO" id="GO:0045901">
    <property type="term" value="P:positive regulation of translational elongation"/>
    <property type="evidence" value="ECO:0007669"/>
    <property type="project" value="InterPro"/>
</dbReference>
<dbReference type="GO" id="GO:0045905">
    <property type="term" value="P:positive regulation of translational termination"/>
    <property type="evidence" value="ECO:0007669"/>
    <property type="project" value="InterPro"/>
</dbReference>
<dbReference type="CDD" id="cd04468">
    <property type="entry name" value="S1_eIF5A"/>
    <property type="match status" value="1"/>
</dbReference>
<dbReference type="FunFam" id="2.30.30.30:FF:000012">
    <property type="entry name" value="Eukaryotic translation initiation factor 5A"/>
    <property type="match status" value="1"/>
</dbReference>
<dbReference type="FunFam" id="2.40.50.140:FF:000034">
    <property type="entry name" value="Eukaryotic translation initiation factor 5A"/>
    <property type="match status" value="1"/>
</dbReference>
<dbReference type="Gene3D" id="2.30.30.30">
    <property type="match status" value="1"/>
</dbReference>
<dbReference type="Gene3D" id="2.40.50.140">
    <property type="entry name" value="Nucleic acid-binding proteins"/>
    <property type="match status" value="1"/>
</dbReference>
<dbReference type="InterPro" id="IPR001884">
    <property type="entry name" value="IF5A-like"/>
</dbReference>
<dbReference type="InterPro" id="IPR048670">
    <property type="entry name" value="IF5A-like_N"/>
</dbReference>
<dbReference type="InterPro" id="IPR012340">
    <property type="entry name" value="NA-bd_OB-fold"/>
</dbReference>
<dbReference type="InterPro" id="IPR014722">
    <property type="entry name" value="Rib_uL2_dom2"/>
</dbReference>
<dbReference type="InterPro" id="IPR019769">
    <property type="entry name" value="Trans_elong_IF5A_hypusine_site"/>
</dbReference>
<dbReference type="InterPro" id="IPR020189">
    <property type="entry name" value="Transl_elong_IF5A_C"/>
</dbReference>
<dbReference type="InterPro" id="IPR008991">
    <property type="entry name" value="Translation_prot_SH3-like_sf"/>
</dbReference>
<dbReference type="NCBIfam" id="TIGR00037">
    <property type="entry name" value="eIF_5A"/>
    <property type="match status" value="1"/>
</dbReference>
<dbReference type="PANTHER" id="PTHR11673">
    <property type="entry name" value="TRANSLATION INITIATION FACTOR 5A FAMILY MEMBER"/>
    <property type="match status" value="1"/>
</dbReference>
<dbReference type="Pfam" id="PF01287">
    <property type="entry name" value="eIF-5a"/>
    <property type="match status" value="1"/>
</dbReference>
<dbReference type="Pfam" id="PF21485">
    <property type="entry name" value="IF5A-like_N"/>
    <property type="match status" value="1"/>
</dbReference>
<dbReference type="PIRSF" id="PIRSF003025">
    <property type="entry name" value="eIF5A"/>
    <property type="match status" value="1"/>
</dbReference>
<dbReference type="SMART" id="SM01376">
    <property type="entry name" value="eIF-5a"/>
    <property type="match status" value="1"/>
</dbReference>
<dbReference type="SUPFAM" id="SSF50249">
    <property type="entry name" value="Nucleic acid-binding proteins"/>
    <property type="match status" value="1"/>
</dbReference>
<dbReference type="SUPFAM" id="SSF50104">
    <property type="entry name" value="Translation proteins SH3-like domain"/>
    <property type="match status" value="1"/>
</dbReference>
<dbReference type="PROSITE" id="PS00302">
    <property type="entry name" value="IF5A_HYPUSINE"/>
    <property type="match status" value="1"/>
</dbReference>
<name>IF5A_MANES</name>
<protein>
    <recommendedName>
        <fullName>Eukaryotic translation initiation factor 5A</fullName>
        <shortName>eIF-5A</shortName>
    </recommendedName>
</protein>